<gene>
    <name evidence="1" type="primary">msrQ</name>
    <name type="ordered locus">ECA0263</name>
</gene>
<name>MSRQ_PECAS</name>
<keyword id="KW-0997">Cell inner membrane</keyword>
<keyword id="KW-1003">Cell membrane</keyword>
<keyword id="KW-0249">Electron transport</keyword>
<keyword id="KW-0285">Flavoprotein</keyword>
<keyword id="KW-0288">FMN</keyword>
<keyword id="KW-0349">Heme</keyword>
<keyword id="KW-0408">Iron</keyword>
<keyword id="KW-0472">Membrane</keyword>
<keyword id="KW-0479">Metal-binding</keyword>
<keyword id="KW-1185">Reference proteome</keyword>
<keyword id="KW-0812">Transmembrane</keyword>
<keyword id="KW-1133">Transmembrane helix</keyword>
<keyword id="KW-0813">Transport</keyword>
<proteinExistence type="inferred from homology"/>
<reference key="1">
    <citation type="journal article" date="2004" name="Proc. Natl. Acad. Sci. U.S.A.">
        <title>Genome sequence of the enterobacterial phytopathogen Erwinia carotovora subsp. atroseptica and characterization of virulence factors.</title>
        <authorList>
            <person name="Bell K.S."/>
            <person name="Sebaihia M."/>
            <person name="Pritchard L."/>
            <person name="Holden M.T.G."/>
            <person name="Hyman L.J."/>
            <person name="Holeva M.C."/>
            <person name="Thomson N.R."/>
            <person name="Bentley S.D."/>
            <person name="Churcher L.J.C."/>
            <person name="Mungall K."/>
            <person name="Atkin R."/>
            <person name="Bason N."/>
            <person name="Brooks K."/>
            <person name="Chillingworth T."/>
            <person name="Clark K."/>
            <person name="Doggett J."/>
            <person name="Fraser A."/>
            <person name="Hance Z."/>
            <person name="Hauser H."/>
            <person name="Jagels K."/>
            <person name="Moule S."/>
            <person name="Norbertczak H."/>
            <person name="Ormond D."/>
            <person name="Price C."/>
            <person name="Quail M.A."/>
            <person name="Sanders M."/>
            <person name="Walker D."/>
            <person name="Whitehead S."/>
            <person name="Salmond G.P.C."/>
            <person name="Birch P.R.J."/>
            <person name="Parkhill J."/>
            <person name="Toth I.K."/>
        </authorList>
    </citation>
    <scope>NUCLEOTIDE SEQUENCE [LARGE SCALE GENOMIC DNA]</scope>
    <source>
        <strain>SCRI 1043 / ATCC BAA-672</strain>
    </source>
</reference>
<comment type="function">
    <text evidence="1">Part of the MsrPQ system that repairs oxidized periplasmic proteins containing methionine sulfoxide residues (Met-O), using respiratory chain electrons. Thus protects these proteins from oxidative-stress damage caused by reactive species of oxygen and chlorine generated by the host defense mechanisms. MsrPQ is essential for the maintenance of envelope integrity under bleach stress, rescuing a wide series of structurally unrelated periplasmic proteins from methionine oxidation. MsrQ provides electrons for reduction to the reductase catalytic subunit MsrP, using the quinone pool of the respiratory chain.</text>
</comment>
<comment type="cofactor">
    <cofactor evidence="1">
        <name>FMN</name>
        <dbReference type="ChEBI" id="CHEBI:58210"/>
    </cofactor>
    <text evidence="1">Binds 1 FMN per subunit.</text>
</comment>
<comment type="cofactor">
    <cofactor evidence="1">
        <name>heme b</name>
        <dbReference type="ChEBI" id="CHEBI:60344"/>
    </cofactor>
    <text evidence="1">Binds 1 heme b (iron(II)-protoporphyrin IX) group per subunit.</text>
</comment>
<comment type="subunit">
    <text evidence="1">Heterodimer of a catalytic subunit (MsrP) and a heme-binding subunit (MsrQ).</text>
</comment>
<comment type="subcellular location">
    <subcellularLocation>
        <location evidence="1">Cell inner membrane</location>
        <topology evidence="1">Multi-pass membrane protein</topology>
    </subcellularLocation>
</comment>
<comment type="similarity">
    <text evidence="1">Belongs to the MsrQ family.</text>
</comment>
<evidence type="ECO:0000255" key="1">
    <source>
        <dbReference type="HAMAP-Rule" id="MF_01207"/>
    </source>
</evidence>
<sequence>MRLTLQHINRLKVLLHLAGFLPLLWLILSVDQGWFSADPAKDIQHFTGRMALKLLLATLLVTPLARYGKQPLLIRCRRLLGLWCFFWATLHLVSYALLELGLDHLALLGKELISRPYLTLGIISWLILLALAVTSPQIMMRKLGSQWQKLHNFVYLVAILTPIHYLWSVKTLSPQPILYALAALILLLLRYKKFRQWWR</sequence>
<accession>Q6DAJ0</accession>
<organism>
    <name type="scientific">Pectobacterium atrosepticum (strain SCRI 1043 / ATCC BAA-672)</name>
    <name type="common">Erwinia carotovora subsp. atroseptica</name>
    <dbReference type="NCBI Taxonomy" id="218491"/>
    <lineage>
        <taxon>Bacteria</taxon>
        <taxon>Pseudomonadati</taxon>
        <taxon>Pseudomonadota</taxon>
        <taxon>Gammaproteobacteria</taxon>
        <taxon>Enterobacterales</taxon>
        <taxon>Pectobacteriaceae</taxon>
        <taxon>Pectobacterium</taxon>
    </lineage>
</organism>
<feature type="chain" id="PRO_1000066175" description="Protein-methionine-sulfoxide reductase heme-binding subunit MsrQ">
    <location>
        <begin position="1"/>
        <end position="199"/>
    </location>
</feature>
<feature type="transmembrane region" description="Helical" evidence="1">
    <location>
        <begin position="13"/>
        <end position="33"/>
    </location>
</feature>
<feature type="transmembrane region" description="Helical" evidence="1">
    <location>
        <begin position="79"/>
        <end position="99"/>
    </location>
</feature>
<feature type="transmembrane region" description="Helical" evidence="1">
    <location>
        <begin position="120"/>
        <end position="140"/>
    </location>
</feature>
<feature type="transmembrane region" description="Helical" evidence="1">
    <location>
        <begin position="147"/>
        <end position="167"/>
    </location>
</feature>
<feature type="transmembrane region" description="Helical" evidence="1">
    <location>
        <begin position="169"/>
        <end position="189"/>
    </location>
</feature>
<protein>
    <recommendedName>
        <fullName evidence="1">Protein-methionine-sulfoxide reductase heme-binding subunit MsrQ</fullName>
    </recommendedName>
    <alternativeName>
        <fullName evidence="1">Flavocytochrome MsrQ</fullName>
    </alternativeName>
</protein>
<dbReference type="EMBL" id="BX950851">
    <property type="protein sequence ID" value="CAG73183.1"/>
    <property type="molecule type" value="Genomic_DNA"/>
</dbReference>
<dbReference type="RefSeq" id="WP_011091898.1">
    <property type="nucleotide sequence ID" value="NC_004547.2"/>
</dbReference>
<dbReference type="SMR" id="Q6DAJ0"/>
<dbReference type="STRING" id="218491.ECA0263"/>
<dbReference type="GeneID" id="57207136"/>
<dbReference type="KEGG" id="eca:ECA0263"/>
<dbReference type="PATRIC" id="fig|218491.5.peg.265"/>
<dbReference type="eggNOG" id="COG2717">
    <property type="taxonomic scope" value="Bacteria"/>
</dbReference>
<dbReference type="HOGENOM" id="CLU_080662_1_0_6"/>
<dbReference type="OrthoDB" id="9788328at2"/>
<dbReference type="Proteomes" id="UP000007966">
    <property type="component" value="Chromosome"/>
</dbReference>
<dbReference type="GO" id="GO:0005886">
    <property type="term" value="C:plasma membrane"/>
    <property type="evidence" value="ECO:0007669"/>
    <property type="project" value="UniProtKB-SubCell"/>
</dbReference>
<dbReference type="GO" id="GO:0009055">
    <property type="term" value="F:electron transfer activity"/>
    <property type="evidence" value="ECO:0007669"/>
    <property type="project" value="UniProtKB-UniRule"/>
</dbReference>
<dbReference type="GO" id="GO:0010181">
    <property type="term" value="F:FMN binding"/>
    <property type="evidence" value="ECO:0007669"/>
    <property type="project" value="UniProtKB-UniRule"/>
</dbReference>
<dbReference type="GO" id="GO:0020037">
    <property type="term" value="F:heme binding"/>
    <property type="evidence" value="ECO:0007669"/>
    <property type="project" value="UniProtKB-UniRule"/>
</dbReference>
<dbReference type="GO" id="GO:0046872">
    <property type="term" value="F:metal ion binding"/>
    <property type="evidence" value="ECO:0007669"/>
    <property type="project" value="UniProtKB-KW"/>
</dbReference>
<dbReference type="GO" id="GO:0016679">
    <property type="term" value="F:oxidoreductase activity, acting on diphenols and related substances as donors"/>
    <property type="evidence" value="ECO:0007669"/>
    <property type="project" value="TreeGrafter"/>
</dbReference>
<dbReference type="GO" id="GO:0030091">
    <property type="term" value="P:protein repair"/>
    <property type="evidence" value="ECO:0007669"/>
    <property type="project" value="UniProtKB-UniRule"/>
</dbReference>
<dbReference type="HAMAP" id="MF_01207">
    <property type="entry name" value="MsrQ"/>
    <property type="match status" value="1"/>
</dbReference>
<dbReference type="InterPro" id="IPR013130">
    <property type="entry name" value="Fe3_Rdtase_TM_dom"/>
</dbReference>
<dbReference type="InterPro" id="IPR022837">
    <property type="entry name" value="MsrQ-like"/>
</dbReference>
<dbReference type="NCBIfam" id="NF003832">
    <property type="entry name" value="PRK05419.1-4"/>
    <property type="match status" value="1"/>
</dbReference>
<dbReference type="PANTHER" id="PTHR36964">
    <property type="entry name" value="PROTEIN-METHIONINE-SULFOXIDE REDUCTASE HEME-BINDING SUBUNIT MSRQ"/>
    <property type="match status" value="1"/>
</dbReference>
<dbReference type="PANTHER" id="PTHR36964:SF1">
    <property type="entry name" value="PROTEIN-METHIONINE-SULFOXIDE REDUCTASE HEME-BINDING SUBUNIT MSRQ"/>
    <property type="match status" value="1"/>
</dbReference>
<dbReference type="Pfam" id="PF01794">
    <property type="entry name" value="Ferric_reduct"/>
    <property type="match status" value="1"/>
</dbReference>